<protein>
    <recommendedName>
        <fullName evidence="1">UPF0145 protein CLL_A2504</fullName>
    </recommendedName>
</protein>
<feature type="chain" id="PRO_1000119987" description="UPF0145 protein CLL_A2504">
    <location>
        <begin position="1"/>
        <end position="106"/>
    </location>
</feature>
<accession>B2TS86</accession>
<name>Y2504_CLOBB</name>
<organism>
    <name type="scientific">Clostridium botulinum (strain Eklund 17B / Type B)</name>
    <dbReference type="NCBI Taxonomy" id="935198"/>
    <lineage>
        <taxon>Bacteria</taxon>
        <taxon>Bacillati</taxon>
        <taxon>Bacillota</taxon>
        <taxon>Clostridia</taxon>
        <taxon>Eubacteriales</taxon>
        <taxon>Clostridiaceae</taxon>
        <taxon>Clostridium</taxon>
    </lineage>
</organism>
<reference key="1">
    <citation type="submission" date="2008-04" db="EMBL/GenBank/DDBJ databases">
        <title>Complete sequence of Clostridium botulinum strain Eklund.</title>
        <authorList>
            <person name="Brinkac L.M."/>
            <person name="Brown J.L."/>
            <person name="Bruce D."/>
            <person name="Detter C."/>
            <person name="Munk C."/>
            <person name="Smith L.A."/>
            <person name="Smith T.J."/>
            <person name="Sutton G."/>
            <person name="Brettin T.S."/>
        </authorList>
    </citation>
    <scope>NUCLEOTIDE SEQUENCE [LARGE SCALE GENOMIC DNA]</scope>
    <source>
        <strain>Eklund 17B / Type B</strain>
    </source>
</reference>
<gene>
    <name type="ordered locus">CLL_A2504</name>
</gene>
<sequence>MIITTTPSIEGKNILEYKGVVFGEVISGVNFIKDFAAGLSNFFGGRSNTYEGELIEAREKAMKEMENRAIQIGANAVVGVDIDYEVLGADNGMLMVTASGTAVYYE</sequence>
<dbReference type="EMBL" id="CP001056">
    <property type="protein sequence ID" value="ACD23767.1"/>
    <property type="molecule type" value="Genomic_DNA"/>
</dbReference>
<dbReference type="SMR" id="B2TS86"/>
<dbReference type="KEGG" id="cbk:CLL_A2504"/>
<dbReference type="HOGENOM" id="CLU_117144_3_1_9"/>
<dbReference type="Proteomes" id="UP000001195">
    <property type="component" value="Chromosome"/>
</dbReference>
<dbReference type="Gene3D" id="3.30.110.70">
    <property type="entry name" value="Hypothetical protein apc22750. Chain B"/>
    <property type="match status" value="1"/>
</dbReference>
<dbReference type="HAMAP" id="MF_00338">
    <property type="entry name" value="UPF0145"/>
    <property type="match status" value="1"/>
</dbReference>
<dbReference type="InterPro" id="IPR035439">
    <property type="entry name" value="UPF0145_dom_sf"/>
</dbReference>
<dbReference type="InterPro" id="IPR002765">
    <property type="entry name" value="UPF0145_YbjQ-like"/>
</dbReference>
<dbReference type="NCBIfam" id="NF002224">
    <property type="entry name" value="PRK01119.1"/>
    <property type="match status" value="1"/>
</dbReference>
<dbReference type="PANTHER" id="PTHR34068">
    <property type="entry name" value="UPF0145 PROTEIN YBJQ"/>
    <property type="match status" value="1"/>
</dbReference>
<dbReference type="PANTHER" id="PTHR34068:SF1">
    <property type="entry name" value="UPF0145 PROTEIN YBJQ"/>
    <property type="match status" value="1"/>
</dbReference>
<dbReference type="Pfam" id="PF01906">
    <property type="entry name" value="YbjQ_1"/>
    <property type="match status" value="1"/>
</dbReference>
<dbReference type="SUPFAM" id="SSF117782">
    <property type="entry name" value="YbjQ-like"/>
    <property type="match status" value="1"/>
</dbReference>
<comment type="similarity">
    <text evidence="1">Belongs to the UPF0145 family.</text>
</comment>
<evidence type="ECO:0000255" key="1">
    <source>
        <dbReference type="HAMAP-Rule" id="MF_00338"/>
    </source>
</evidence>
<proteinExistence type="inferred from homology"/>